<accession>A8YXG4</accession>
<reference key="1">
    <citation type="journal article" date="2008" name="J. Bacteriol.">
        <title>Genome sequence of Lactobacillus helveticus: an organism distinguished by selective gene loss and IS element expansion.</title>
        <authorList>
            <person name="Callanan M."/>
            <person name="Kaleta P."/>
            <person name="O'Callaghan J."/>
            <person name="O'Sullivan O."/>
            <person name="Jordan K."/>
            <person name="McAuliffe O."/>
            <person name="Sangrador-Vegas A."/>
            <person name="Slattery L."/>
            <person name="Fitzgerald G.F."/>
            <person name="Beresford T."/>
            <person name="Ross R.P."/>
        </authorList>
    </citation>
    <scope>NUCLEOTIDE SEQUENCE [LARGE SCALE GENOMIC DNA]</scope>
    <source>
        <strain>DPC 4571</strain>
    </source>
</reference>
<evidence type="ECO:0000255" key="1">
    <source>
        <dbReference type="HAMAP-Rule" id="MF_01184"/>
    </source>
</evidence>
<organism>
    <name type="scientific">Lactobacillus helveticus (strain DPC 4571)</name>
    <dbReference type="NCBI Taxonomy" id="405566"/>
    <lineage>
        <taxon>Bacteria</taxon>
        <taxon>Bacillati</taxon>
        <taxon>Bacillota</taxon>
        <taxon>Bacilli</taxon>
        <taxon>Lactobacillales</taxon>
        <taxon>Lactobacillaceae</taxon>
        <taxon>Lactobacillus</taxon>
    </lineage>
</organism>
<keyword id="KW-0963">Cytoplasm</keyword>
<keyword id="KW-0328">Glycosyltransferase</keyword>
<keyword id="KW-0660">Purine salvage</keyword>
<keyword id="KW-0808">Transferase</keyword>
<protein>
    <recommendedName>
        <fullName evidence="1">Xanthine phosphoribosyltransferase</fullName>
        <shortName evidence="1">XPRTase</shortName>
        <ecNumber evidence="1">2.4.2.22</ecNumber>
    </recommendedName>
</protein>
<proteinExistence type="inferred from homology"/>
<name>XPT_LACH4</name>
<comment type="function">
    <text evidence="1">Converts the preformed base xanthine, a product of nucleic acid breakdown, to xanthosine 5'-monophosphate (XMP), so it can be reused for RNA or DNA synthesis.</text>
</comment>
<comment type="catalytic activity">
    <reaction evidence="1">
        <text>XMP + diphosphate = xanthine + 5-phospho-alpha-D-ribose 1-diphosphate</text>
        <dbReference type="Rhea" id="RHEA:10800"/>
        <dbReference type="ChEBI" id="CHEBI:17712"/>
        <dbReference type="ChEBI" id="CHEBI:33019"/>
        <dbReference type="ChEBI" id="CHEBI:57464"/>
        <dbReference type="ChEBI" id="CHEBI:58017"/>
        <dbReference type="EC" id="2.4.2.22"/>
    </reaction>
</comment>
<comment type="pathway">
    <text evidence="1">Purine metabolism; XMP biosynthesis via salvage pathway; XMP from xanthine: step 1/1.</text>
</comment>
<comment type="subunit">
    <text evidence="1">Homodimer.</text>
</comment>
<comment type="subcellular location">
    <subcellularLocation>
        <location evidence="1">Cytoplasm</location>
    </subcellularLocation>
</comment>
<comment type="similarity">
    <text evidence="1">Belongs to the purine/pyrimidine phosphoribosyltransferase family. Xpt subfamily.</text>
</comment>
<dbReference type="EC" id="2.4.2.22" evidence="1"/>
<dbReference type="EMBL" id="CP000517">
    <property type="protein sequence ID" value="ABX26495.1"/>
    <property type="molecule type" value="Genomic_DNA"/>
</dbReference>
<dbReference type="RefSeq" id="WP_012211347.1">
    <property type="nucleotide sequence ID" value="NC_010080.1"/>
</dbReference>
<dbReference type="SMR" id="A8YXG4"/>
<dbReference type="KEGG" id="lhe:lhv_0253"/>
<dbReference type="eggNOG" id="COG0503">
    <property type="taxonomic scope" value="Bacteria"/>
</dbReference>
<dbReference type="HOGENOM" id="CLU_099015_0_0_9"/>
<dbReference type="UniPathway" id="UPA00602">
    <property type="reaction ID" value="UER00658"/>
</dbReference>
<dbReference type="Proteomes" id="UP000000790">
    <property type="component" value="Chromosome"/>
</dbReference>
<dbReference type="GO" id="GO:0005737">
    <property type="term" value="C:cytoplasm"/>
    <property type="evidence" value="ECO:0007669"/>
    <property type="project" value="UniProtKB-SubCell"/>
</dbReference>
<dbReference type="GO" id="GO:0000310">
    <property type="term" value="F:xanthine phosphoribosyltransferase activity"/>
    <property type="evidence" value="ECO:0007669"/>
    <property type="project" value="UniProtKB-UniRule"/>
</dbReference>
<dbReference type="GO" id="GO:0006166">
    <property type="term" value="P:purine ribonucleoside salvage"/>
    <property type="evidence" value="ECO:0007669"/>
    <property type="project" value="UniProtKB-KW"/>
</dbReference>
<dbReference type="GO" id="GO:0046110">
    <property type="term" value="P:xanthine metabolic process"/>
    <property type="evidence" value="ECO:0007669"/>
    <property type="project" value="InterPro"/>
</dbReference>
<dbReference type="GO" id="GO:0032265">
    <property type="term" value="P:XMP salvage"/>
    <property type="evidence" value="ECO:0007669"/>
    <property type="project" value="UniProtKB-UniRule"/>
</dbReference>
<dbReference type="CDD" id="cd06223">
    <property type="entry name" value="PRTases_typeI"/>
    <property type="match status" value="1"/>
</dbReference>
<dbReference type="Gene3D" id="3.40.50.2020">
    <property type="match status" value="1"/>
</dbReference>
<dbReference type="HAMAP" id="MF_01184">
    <property type="entry name" value="XPRTase"/>
    <property type="match status" value="1"/>
</dbReference>
<dbReference type="InterPro" id="IPR000836">
    <property type="entry name" value="PRibTrfase_dom"/>
</dbReference>
<dbReference type="InterPro" id="IPR029057">
    <property type="entry name" value="PRTase-like"/>
</dbReference>
<dbReference type="InterPro" id="IPR050118">
    <property type="entry name" value="Pur/Pyrimidine_PRTase"/>
</dbReference>
<dbReference type="InterPro" id="IPR010079">
    <property type="entry name" value="Xanthine_PRibTrfase"/>
</dbReference>
<dbReference type="NCBIfam" id="NF006671">
    <property type="entry name" value="PRK09219.1"/>
    <property type="match status" value="1"/>
</dbReference>
<dbReference type="NCBIfam" id="TIGR01744">
    <property type="entry name" value="XPRTase"/>
    <property type="match status" value="1"/>
</dbReference>
<dbReference type="PANTHER" id="PTHR43864">
    <property type="entry name" value="HYPOXANTHINE/GUANINE PHOSPHORIBOSYLTRANSFERASE"/>
    <property type="match status" value="1"/>
</dbReference>
<dbReference type="PANTHER" id="PTHR43864:SF1">
    <property type="entry name" value="XANTHINE PHOSPHORIBOSYLTRANSFERASE"/>
    <property type="match status" value="1"/>
</dbReference>
<dbReference type="Pfam" id="PF00156">
    <property type="entry name" value="Pribosyltran"/>
    <property type="match status" value="1"/>
</dbReference>
<dbReference type="SUPFAM" id="SSF53271">
    <property type="entry name" value="PRTase-like"/>
    <property type="match status" value="1"/>
</dbReference>
<feature type="chain" id="PRO_0000339707" description="Xanthine phosphoribosyltransferase">
    <location>
        <begin position="1"/>
        <end position="192"/>
    </location>
</feature>
<feature type="binding site" evidence="1">
    <location>
        <position position="20"/>
    </location>
    <ligand>
        <name>xanthine</name>
        <dbReference type="ChEBI" id="CHEBI:17712"/>
    </ligand>
</feature>
<feature type="binding site" evidence="1">
    <location>
        <position position="27"/>
    </location>
    <ligand>
        <name>xanthine</name>
        <dbReference type="ChEBI" id="CHEBI:17712"/>
    </ligand>
</feature>
<feature type="binding site" evidence="1">
    <location>
        <begin position="128"/>
        <end position="132"/>
    </location>
    <ligand>
        <name>5-phospho-alpha-D-ribose 1-diphosphate</name>
        <dbReference type="ChEBI" id="CHEBI:58017"/>
    </ligand>
</feature>
<feature type="binding site" evidence="1">
    <location>
        <position position="156"/>
    </location>
    <ligand>
        <name>xanthine</name>
        <dbReference type="ChEBI" id="CHEBI:17712"/>
    </ligand>
</feature>
<sequence>MKLLEDRIKKDGEVLDGDVLKINSFLNHQVDPQLMMQCGEEFKRLFADQKIDKVLTCEASGIAPGVMTAYVLDVPMVFARKKKPSTLNDAVYWADVFSYTKKVNNKICVEEKLLHKGENLLIIDDFVAQGEAVKGMVNIAKQAECNIVGVGAVVAKTFQGGSDWVKQHGLHFEALASIDSFKDGQVHFGKEN</sequence>
<gene>
    <name evidence="1" type="primary">xpt</name>
    <name type="ordered locus">lhv_0253</name>
</gene>